<protein>
    <recommendedName>
        <fullName>Acylphosphatase</fullName>
        <ecNumber>3.6.1.7</ecNumber>
    </recommendedName>
    <alternativeName>
        <fullName>Acylphosphate phosphohydrolase</fullName>
    </alternativeName>
</protein>
<reference key="1">
    <citation type="journal article" date="2008" name="Antimicrob. Agents Chemother.">
        <title>Mutated response regulator graR is responsible for phenotypic conversion of Staphylococcus aureus from heterogeneous vancomycin-intermediate resistance to vancomycin-intermediate resistance.</title>
        <authorList>
            <person name="Neoh H.-M."/>
            <person name="Cui L."/>
            <person name="Yuzawa H."/>
            <person name="Takeuchi F."/>
            <person name="Matsuo M."/>
            <person name="Hiramatsu K."/>
        </authorList>
    </citation>
    <scope>NUCLEOTIDE SEQUENCE [LARGE SCALE GENOMIC DNA]</scope>
    <source>
        <strain>Mu3 / ATCC 700698</strain>
    </source>
</reference>
<comment type="catalytic activity">
    <reaction>
        <text>an acyl phosphate + H2O = a carboxylate + phosphate + H(+)</text>
        <dbReference type="Rhea" id="RHEA:14965"/>
        <dbReference type="ChEBI" id="CHEBI:15377"/>
        <dbReference type="ChEBI" id="CHEBI:15378"/>
        <dbReference type="ChEBI" id="CHEBI:29067"/>
        <dbReference type="ChEBI" id="CHEBI:43474"/>
        <dbReference type="ChEBI" id="CHEBI:59918"/>
        <dbReference type="EC" id="3.6.1.7"/>
    </reaction>
</comment>
<comment type="similarity">
    <text evidence="2">Belongs to the acylphosphatase family.</text>
</comment>
<organism>
    <name type="scientific">Staphylococcus aureus (strain Mu3 / ATCC 700698)</name>
    <dbReference type="NCBI Taxonomy" id="418127"/>
    <lineage>
        <taxon>Bacteria</taxon>
        <taxon>Bacillati</taxon>
        <taxon>Bacillota</taxon>
        <taxon>Bacilli</taxon>
        <taxon>Bacillales</taxon>
        <taxon>Staphylococcaceae</taxon>
        <taxon>Staphylococcus</taxon>
    </lineage>
</organism>
<name>ACYP_STAA1</name>
<evidence type="ECO:0000255" key="1">
    <source>
        <dbReference type="PROSITE-ProRule" id="PRU00520"/>
    </source>
</evidence>
<evidence type="ECO:0000305" key="2"/>
<keyword id="KW-0378">Hydrolase</keyword>
<feature type="chain" id="PRO_0000326812" description="Acylphosphatase">
    <location>
        <begin position="1"/>
        <end position="89"/>
    </location>
</feature>
<feature type="domain" description="Acylphosphatase-like" evidence="1">
    <location>
        <begin position="3"/>
        <end position="89"/>
    </location>
</feature>
<feature type="active site" evidence="1">
    <location>
        <position position="18"/>
    </location>
</feature>
<feature type="active site" evidence="1">
    <location>
        <position position="36"/>
    </location>
</feature>
<sequence>MRHIHLQVFGRVQGVGFRYFTQRIAMNYNIVGTVQNVDDYVEIYAQGDDADIERFIQGVIEGASPASNVTSHQLEELELNQKLSDFRSI</sequence>
<gene>
    <name type="primary">acyP</name>
    <name type="ordered locus">SAHV_1392</name>
</gene>
<dbReference type="EC" id="3.6.1.7"/>
<dbReference type="EMBL" id="AP009324">
    <property type="protein sequence ID" value="BAF78275.1"/>
    <property type="molecule type" value="Genomic_DNA"/>
</dbReference>
<dbReference type="RefSeq" id="WP_001215907.1">
    <property type="nucleotide sequence ID" value="NZ_CTYB01000057.1"/>
</dbReference>
<dbReference type="SMR" id="A7X283"/>
<dbReference type="KEGG" id="saw:SAHV_1392"/>
<dbReference type="HOGENOM" id="CLU_141932_2_1_9"/>
<dbReference type="GO" id="GO:0003998">
    <property type="term" value="F:acylphosphatase activity"/>
    <property type="evidence" value="ECO:0007669"/>
    <property type="project" value="UniProtKB-EC"/>
</dbReference>
<dbReference type="GO" id="GO:0016743">
    <property type="term" value="F:carboxyl- or carbamoyltransferase activity"/>
    <property type="evidence" value="ECO:0007669"/>
    <property type="project" value="TreeGrafter"/>
</dbReference>
<dbReference type="GO" id="GO:0008270">
    <property type="term" value="F:zinc ion binding"/>
    <property type="evidence" value="ECO:0007669"/>
    <property type="project" value="TreeGrafter"/>
</dbReference>
<dbReference type="GO" id="GO:0051604">
    <property type="term" value="P:protein maturation"/>
    <property type="evidence" value="ECO:0007669"/>
    <property type="project" value="TreeGrafter"/>
</dbReference>
<dbReference type="Gene3D" id="3.30.70.100">
    <property type="match status" value="1"/>
</dbReference>
<dbReference type="InterPro" id="IPR001792">
    <property type="entry name" value="Acylphosphatase-like_dom"/>
</dbReference>
<dbReference type="InterPro" id="IPR036046">
    <property type="entry name" value="Acylphosphatase-like_dom_sf"/>
</dbReference>
<dbReference type="InterPro" id="IPR017968">
    <property type="entry name" value="Acylphosphatase_CS"/>
</dbReference>
<dbReference type="InterPro" id="IPR051060">
    <property type="entry name" value="Carbamoyltrans_HypF-like"/>
</dbReference>
<dbReference type="NCBIfam" id="NF011005">
    <property type="entry name" value="PRK14431.1"/>
    <property type="match status" value="1"/>
</dbReference>
<dbReference type="PANTHER" id="PTHR42959">
    <property type="entry name" value="CARBAMOYLTRANSFERASE"/>
    <property type="match status" value="1"/>
</dbReference>
<dbReference type="PANTHER" id="PTHR42959:SF1">
    <property type="entry name" value="CARBAMOYLTRANSFERASE HYPF"/>
    <property type="match status" value="1"/>
</dbReference>
<dbReference type="Pfam" id="PF00708">
    <property type="entry name" value="Acylphosphatase"/>
    <property type="match status" value="1"/>
</dbReference>
<dbReference type="SUPFAM" id="SSF54975">
    <property type="entry name" value="Acylphosphatase/BLUF domain-like"/>
    <property type="match status" value="1"/>
</dbReference>
<dbReference type="PROSITE" id="PS00150">
    <property type="entry name" value="ACYLPHOSPHATASE_1"/>
    <property type="match status" value="1"/>
</dbReference>
<dbReference type="PROSITE" id="PS51160">
    <property type="entry name" value="ACYLPHOSPHATASE_3"/>
    <property type="match status" value="1"/>
</dbReference>
<proteinExistence type="inferred from homology"/>
<accession>A7X283</accession>